<organism>
    <name type="scientific">Shewanella sediminis (strain HAW-EB3)</name>
    <dbReference type="NCBI Taxonomy" id="425104"/>
    <lineage>
        <taxon>Bacteria</taxon>
        <taxon>Pseudomonadati</taxon>
        <taxon>Pseudomonadota</taxon>
        <taxon>Gammaproteobacteria</taxon>
        <taxon>Alteromonadales</taxon>
        <taxon>Shewanellaceae</taxon>
        <taxon>Shewanella</taxon>
    </lineage>
</organism>
<proteinExistence type="inferred from homology"/>
<evidence type="ECO:0000255" key="1">
    <source>
        <dbReference type="HAMAP-Rule" id="MF_00300"/>
    </source>
</evidence>
<sequence length="364" mass="39202">MSGNSIGQNFVVTTFGESHGKALGCIIDGCPPGLELNEADMQRDLDRRRPGTSRYTTARREPDEVRVLSGIFEGKTTGTSIGLMIENTDQRSKDYSNIKDLFRPGHADYTYQQKYGLRDYRGGGRSSARETAMRVAAGAVAKKYLKQVHGIEINGYLSQLGPIKADTVDFSQIEQNAFFFPDESKLDELDEYMRKLIKSGDSIGAKVSVVATGVPVGLGEPVFDRLDAEIAHALMGINAVKGVEIGDGFGVVNQKGSEHRDLMSPEGFASNHAGGILGGISSGQPIVAHIAMKPTSSISIPGESMTAQGDVAEVVTKGRHDPCVGIRAVPIAEAMLAIVLMDHLLRHRAQNMDVNSQTPEIGMR</sequence>
<comment type="function">
    <text evidence="1">Catalyzes the anti-1,4-elimination of the C-3 phosphate and the C-6 proR hydrogen from 5-enolpyruvylshikimate-3-phosphate (EPSP) to yield chorismate, which is the branch point compound that serves as the starting substrate for the three terminal pathways of aromatic amino acid biosynthesis. This reaction introduces a second double bond into the aromatic ring system.</text>
</comment>
<comment type="catalytic activity">
    <reaction evidence="1">
        <text>5-O-(1-carboxyvinyl)-3-phosphoshikimate = chorismate + phosphate</text>
        <dbReference type="Rhea" id="RHEA:21020"/>
        <dbReference type="ChEBI" id="CHEBI:29748"/>
        <dbReference type="ChEBI" id="CHEBI:43474"/>
        <dbReference type="ChEBI" id="CHEBI:57701"/>
        <dbReference type="EC" id="4.2.3.5"/>
    </reaction>
</comment>
<comment type="cofactor">
    <cofactor evidence="1">
        <name>FMNH2</name>
        <dbReference type="ChEBI" id="CHEBI:57618"/>
    </cofactor>
    <text evidence="1">Reduced FMN (FMNH(2)).</text>
</comment>
<comment type="pathway">
    <text evidence="1">Metabolic intermediate biosynthesis; chorismate biosynthesis; chorismate from D-erythrose 4-phosphate and phosphoenolpyruvate: step 7/7.</text>
</comment>
<comment type="subunit">
    <text evidence="1">Homotetramer.</text>
</comment>
<comment type="similarity">
    <text evidence="1">Belongs to the chorismate synthase family.</text>
</comment>
<name>AROC_SHESH</name>
<protein>
    <recommendedName>
        <fullName evidence="1">Chorismate synthase</fullName>
        <shortName evidence="1">CS</shortName>
        <ecNumber evidence="1">4.2.3.5</ecNumber>
    </recommendedName>
    <alternativeName>
        <fullName evidence="1">5-enolpyruvylshikimate-3-phosphate phospholyase</fullName>
    </alternativeName>
</protein>
<keyword id="KW-0028">Amino-acid biosynthesis</keyword>
<keyword id="KW-0057">Aromatic amino acid biosynthesis</keyword>
<keyword id="KW-0274">FAD</keyword>
<keyword id="KW-0285">Flavoprotein</keyword>
<keyword id="KW-0288">FMN</keyword>
<keyword id="KW-0456">Lyase</keyword>
<keyword id="KW-0521">NADP</keyword>
<keyword id="KW-1185">Reference proteome</keyword>
<dbReference type="EC" id="4.2.3.5" evidence="1"/>
<dbReference type="EMBL" id="CP000821">
    <property type="protein sequence ID" value="ABV36249.1"/>
    <property type="molecule type" value="Genomic_DNA"/>
</dbReference>
<dbReference type="RefSeq" id="WP_012141985.1">
    <property type="nucleotide sequence ID" value="NC_009831.1"/>
</dbReference>
<dbReference type="SMR" id="A8FTS6"/>
<dbReference type="STRING" id="425104.Ssed_1638"/>
<dbReference type="KEGG" id="sse:Ssed_1638"/>
<dbReference type="eggNOG" id="COG0082">
    <property type="taxonomic scope" value="Bacteria"/>
</dbReference>
<dbReference type="HOGENOM" id="CLU_034547_0_2_6"/>
<dbReference type="OrthoDB" id="9771806at2"/>
<dbReference type="UniPathway" id="UPA00053">
    <property type="reaction ID" value="UER00090"/>
</dbReference>
<dbReference type="Proteomes" id="UP000002015">
    <property type="component" value="Chromosome"/>
</dbReference>
<dbReference type="GO" id="GO:0005829">
    <property type="term" value="C:cytosol"/>
    <property type="evidence" value="ECO:0007669"/>
    <property type="project" value="TreeGrafter"/>
</dbReference>
<dbReference type="GO" id="GO:0004107">
    <property type="term" value="F:chorismate synthase activity"/>
    <property type="evidence" value="ECO:0007669"/>
    <property type="project" value="UniProtKB-UniRule"/>
</dbReference>
<dbReference type="GO" id="GO:0010181">
    <property type="term" value="F:FMN binding"/>
    <property type="evidence" value="ECO:0007669"/>
    <property type="project" value="TreeGrafter"/>
</dbReference>
<dbReference type="GO" id="GO:0008652">
    <property type="term" value="P:amino acid biosynthetic process"/>
    <property type="evidence" value="ECO:0007669"/>
    <property type="project" value="UniProtKB-KW"/>
</dbReference>
<dbReference type="GO" id="GO:0009073">
    <property type="term" value="P:aromatic amino acid family biosynthetic process"/>
    <property type="evidence" value="ECO:0007669"/>
    <property type="project" value="UniProtKB-KW"/>
</dbReference>
<dbReference type="GO" id="GO:0009423">
    <property type="term" value="P:chorismate biosynthetic process"/>
    <property type="evidence" value="ECO:0007669"/>
    <property type="project" value="UniProtKB-UniRule"/>
</dbReference>
<dbReference type="CDD" id="cd07304">
    <property type="entry name" value="Chorismate_synthase"/>
    <property type="match status" value="1"/>
</dbReference>
<dbReference type="FunFam" id="3.60.150.10:FF:000001">
    <property type="entry name" value="Chorismate synthase"/>
    <property type="match status" value="1"/>
</dbReference>
<dbReference type="Gene3D" id="3.60.150.10">
    <property type="entry name" value="Chorismate synthase AroC"/>
    <property type="match status" value="1"/>
</dbReference>
<dbReference type="HAMAP" id="MF_00300">
    <property type="entry name" value="Chorismate_synth"/>
    <property type="match status" value="1"/>
</dbReference>
<dbReference type="InterPro" id="IPR000453">
    <property type="entry name" value="Chorismate_synth"/>
</dbReference>
<dbReference type="InterPro" id="IPR035904">
    <property type="entry name" value="Chorismate_synth_AroC_sf"/>
</dbReference>
<dbReference type="InterPro" id="IPR020541">
    <property type="entry name" value="Chorismate_synthase_CS"/>
</dbReference>
<dbReference type="NCBIfam" id="TIGR00033">
    <property type="entry name" value="aroC"/>
    <property type="match status" value="1"/>
</dbReference>
<dbReference type="NCBIfam" id="NF003793">
    <property type="entry name" value="PRK05382.1"/>
    <property type="match status" value="1"/>
</dbReference>
<dbReference type="PANTHER" id="PTHR21085">
    <property type="entry name" value="CHORISMATE SYNTHASE"/>
    <property type="match status" value="1"/>
</dbReference>
<dbReference type="PANTHER" id="PTHR21085:SF0">
    <property type="entry name" value="CHORISMATE SYNTHASE"/>
    <property type="match status" value="1"/>
</dbReference>
<dbReference type="Pfam" id="PF01264">
    <property type="entry name" value="Chorismate_synt"/>
    <property type="match status" value="1"/>
</dbReference>
<dbReference type="PIRSF" id="PIRSF001456">
    <property type="entry name" value="Chorismate_synth"/>
    <property type="match status" value="1"/>
</dbReference>
<dbReference type="SUPFAM" id="SSF103263">
    <property type="entry name" value="Chorismate synthase, AroC"/>
    <property type="match status" value="1"/>
</dbReference>
<dbReference type="PROSITE" id="PS00787">
    <property type="entry name" value="CHORISMATE_SYNTHASE_1"/>
    <property type="match status" value="1"/>
</dbReference>
<dbReference type="PROSITE" id="PS00788">
    <property type="entry name" value="CHORISMATE_SYNTHASE_2"/>
    <property type="match status" value="1"/>
</dbReference>
<dbReference type="PROSITE" id="PS00789">
    <property type="entry name" value="CHORISMATE_SYNTHASE_3"/>
    <property type="match status" value="1"/>
</dbReference>
<feature type="chain" id="PRO_1000079010" description="Chorismate synthase">
    <location>
        <begin position="1"/>
        <end position="364"/>
    </location>
</feature>
<feature type="binding site" evidence="1">
    <location>
        <position position="48"/>
    </location>
    <ligand>
        <name>NADP(+)</name>
        <dbReference type="ChEBI" id="CHEBI:58349"/>
    </ligand>
</feature>
<feature type="binding site" evidence="1">
    <location>
        <position position="54"/>
    </location>
    <ligand>
        <name>NADP(+)</name>
        <dbReference type="ChEBI" id="CHEBI:58349"/>
    </ligand>
</feature>
<feature type="binding site" evidence="1">
    <location>
        <begin position="125"/>
        <end position="127"/>
    </location>
    <ligand>
        <name>FMN</name>
        <dbReference type="ChEBI" id="CHEBI:58210"/>
    </ligand>
</feature>
<feature type="binding site" evidence="1">
    <location>
        <begin position="238"/>
        <end position="239"/>
    </location>
    <ligand>
        <name>FMN</name>
        <dbReference type="ChEBI" id="CHEBI:58210"/>
    </ligand>
</feature>
<feature type="binding site" evidence="1">
    <location>
        <position position="278"/>
    </location>
    <ligand>
        <name>FMN</name>
        <dbReference type="ChEBI" id="CHEBI:58210"/>
    </ligand>
</feature>
<feature type="binding site" evidence="1">
    <location>
        <begin position="293"/>
        <end position="297"/>
    </location>
    <ligand>
        <name>FMN</name>
        <dbReference type="ChEBI" id="CHEBI:58210"/>
    </ligand>
</feature>
<feature type="binding site" evidence="1">
    <location>
        <position position="319"/>
    </location>
    <ligand>
        <name>FMN</name>
        <dbReference type="ChEBI" id="CHEBI:58210"/>
    </ligand>
</feature>
<reference key="1">
    <citation type="submission" date="2007-08" db="EMBL/GenBank/DDBJ databases">
        <title>Complete sequence of Shewanella sediminis HAW-EB3.</title>
        <authorList>
            <consortium name="US DOE Joint Genome Institute"/>
            <person name="Copeland A."/>
            <person name="Lucas S."/>
            <person name="Lapidus A."/>
            <person name="Barry K."/>
            <person name="Glavina del Rio T."/>
            <person name="Dalin E."/>
            <person name="Tice H."/>
            <person name="Pitluck S."/>
            <person name="Chertkov O."/>
            <person name="Brettin T."/>
            <person name="Bruce D."/>
            <person name="Detter J.C."/>
            <person name="Han C."/>
            <person name="Schmutz J."/>
            <person name="Larimer F."/>
            <person name="Land M."/>
            <person name="Hauser L."/>
            <person name="Kyrpides N."/>
            <person name="Kim E."/>
            <person name="Zhao J.-S."/>
            <person name="Richardson P."/>
        </authorList>
    </citation>
    <scope>NUCLEOTIDE SEQUENCE [LARGE SCALE GENOMIC DNA]</scope>
    <source>
        <strain>HAW-EB3</strain>
    </source>
</reference>
<gene>
    <name evidence="1" type="primary">aroC</name>
    <name type="ordered locus">Ssed_1638</name>
</gene>
<accession>A8FTS6</accession>